<keyword id="KW-0072">Autophagy</keyword>
<keyword id="KW-0968">Cytoplasmic vesicle</keyword>
<keyword id="KW-0256">Endoplasmic reticulum</keyword>
<keyword id="KW-0333">Golgi apparatus</keyword>
<keyword id="KW-0445">Lipid transport</keyword>
<keyword id="KW-0472">Membrane</keyword>
<keyword id="KW-1185">Reference proteome</keyword>
<keyword id="KW-0812">Transmembrane</keyword>
<keyword id="KW-1133">Transmembrane helix</keyword>
<keyword id="KW-0813">Transport</keyword>
<sequence>MDRDSPFADPDRSDPLPAPSNTLKASIFAQSRIVHPSTSVYNQFGRHRHDDIGQESFHEGIQPSVASLANLQGSYTAKSIHPHHSAIGLRNSSYDDHGDDADEQDPEDLLSDEELGLIAGDARNPSASLSYASNRSRKRRTNPSDPRSRASAVGGLSAKQKALWMWANVDNLDAFLQEVYAYYVGRGAICIALSRSLNLLTVAFVICFSTFLFGCIDYSSIRHDGQLSDVIVGHCVAGFSPFATLVVVLLLAAFGWQAVQFVLGLSRLRAMHRFYEQLLGIPDADVQSIPWHEVVNRLSALRDQHPTTSLSSADEMELGQRTSSSLRRSHPQPLDAHDVANRIMRQENYLIALFNENILDLSVPGLRSRSPSLTRSLEWNLHFCLLGFLFDSNGQVRHAFLSERYRADLIEGLRRRFLFMAVVNAIFAPFIVLYLLLYSFFRYFEEYHKDPSNLGSRQYTQYARWKFREFNELPHLFRRRCRTSYVAASKYMDQFPKEKTAIVARFVAFVAGSFTAVLLLASVMDPDVFVHFNITPQRNVLFYIGVFGAILAVARGMIPDEHVVFEPEAMLREVIEQTHYLPQDWKGRFHSAQVHQAFGQLYTLKIYIFLQELLSVVTTPFVLWLSLPACAPDLIDFLRKYTVHVDGLGHVCSFAVFDFARQPTASTMGGAAAKGIHRQQQQQQQQQQQSGGSGRTRAPRNGMSQAKMEQSILGFRANHPDWDPAAHASTASIQRVDDDAGATTLQYGHGDGRSTSDAPTGVGAGAKVKDLIDHIYRGSGGAAGASRW</sequence>
<protein>
    <recommendedName>
        <fullName>Autophagy-related protein 9</fullName>
    </recommendedName>
</protein>
<name>ATG9_MYCMD</name>
<comment type="function">
    <text evidence="2">Phospholipid scramblase involved in autophagy and cytoplasm to vacuole transport (Cvt) vesicle formation. Cycles between the preautophagosomal structure/phagophore assembly site (PAS) and the cytoplasmic vesicle pool and supplies membrane for the growing autophagosome. Lipid scramblase activity plays a key role in preautophagosomal structure/phagophore assembly by distributing the phospholipids that arrive through ATG2 from the cytoplasmic to the luminal leaflet of the bilayer, thereby driving autophagosomal membrane expansion. Required for mitophagy. Also involved in endoplasmic reticulum-specific autophagic process and is essential for the survival of cells subjected to severe ER stress. Different machineries are required for anterograde trafficking to the PAS during either the Cvt pathway or bulk autophagy and for retrograde trafficking.</text>
</comment>
<comment type="catalytic activity">
    <reaction evidence="2">
        <text>a 1,2-diacyl-sn-glycero-3-phosphocholine(in) = a 1,2-diacyl-sn-glycero-3-phosphocholine(out)</text>
        <dbReference type="Rhea" id="RHEA:38571"/>
        <dbReference type="ChEBI" id="CHEBI:57643"/>
    </reaction>
</comment>
<comment type="catalytic activity">
    <reaction evidence="2">
        <text>a 1,2-diacyl-sn-glycero-3-phospho-L-serine(in) = a 1,2-diacyl-sn-glycero-3-phospho-L-serine(out)</text>
        <dbReference type="Rhea" id="RHEA:38663"/>
        <dbReference type="ChEBI" id="CHEBI:57262"/>
    </reaction>
</comment>
<comment type="catalytic activity">
    <reaction evidence="2">
        <text>a 1,2-diacyl-sn-glycero-3-phosphoethanolamine(in) = a 1,2-diacyl-sn-glycero-3-phosphoethanolamine(out)</text>
        <dbReference type="Rhea" id="RHEA:38895"/>
        <dbReference type="ChEBI" id="CHEBI:64612"/>
    </reaction>
</comment>
<comment type="catalytic activity">
    <reaction evidence="2">
        <text>a 1,2-diacyl-sn-glycero-3-phospho-(1D-myo-inositol-3-phosphate)(in) = a 1,2-diacyl-sn-glycero-3-phospho-(1D-myo-inositol-3-phosphate)(out)</text>
        <dbReference type="Rhea" id="RHEA:67920"/>
        <dbReference type="ChEBI" id="CHEBI:58088"/>
    </reaction>
</comment>
<comment type="subunit">
    <text evidence="1">Homotrimer; forms a homotrimer with a central pore that forms a path between the two membrane leaflets.</text>
</comment>
<comment type="subcellular location">
    <subcellularLocation>
        <location evidence="2">Preautophagosomal structure membrane</location>
        <topology evidence="2">Multi-pass membrane protein</topology>
    </subcellularLocation>
    <subcellularLocation>
        <location evidence="2">Cytoplasmic vesicle membrane</location>
        <topology evidence="2">Multi-pass membrane protein</topology>
    </subcellularLocation>
    <subcellularLocation>
        <location evidence="2">Golgi apparatus membrane</location>
        <topology evidence="2">Multi-pass membrane protein</topology>
    </subcellularLocation>
    <subcellularLocation>
        <location evidence="2">Endoplasmic reticulum membrane</location>
        <topology evidence="2">Multi-pass membrane protein</topology>
    </subcellularLocation>
</comment>
<comment type="domain">
    <text evidence="1">Forms a homotrimer with a solvated central pore, which is connected laterally to the cytosol through the cavity within each protomer. Acts as a lipid scramblase that uses its central pore to function: the central pore opens laterally to accommodate lipid headgroups, thereby enabling lipid flipping and redistribution of lipids added to the outer leaflet of ATG9-containing vesicles, thereby enabling growth into autophagosomes.</text>
</comment>
<comment type="PTM">
    <text evidence="2">Phosphorylated by ATG1. ATG1 phosphorylation is required for preautophagosome elongation.</text>
</comment>
<comment type="similarity">
    <text evidence="5">Belongs to the ATG9 family.</text>
</comment>
<dbReference type="EMBL" id="CM003153">
    <property type="protein sequence ID" value="KIS67278.1"/>
    <property type="molecule type" value="Genomic_DNA"/>
</dbReference>
<dbReference type="RefSeq" id="XP_011391082.1">
    <property type="nucleotide sequence ID" value="XM_011392780.1"/>
</dbReference>
<dbReference type="SMR" id="Q4P683"/>
<dbReference type="FunCoup" id="Q4P683">
    <property type="interactions" value="248"/>
</dbReference>
<dbReference type="STRING" id="237631.Q4P683"/>
<dbReference type="EnsemblFungi" id="KIS67278">
    <property type="protein sequence ID" value="KIS67278"/>
    <property type="gene ID" value="UMAG_04380"/>
</dbReference>
<dbReference type="GeneID" id="23564581"/>
<dbReference type="KEGG" id="uma:UMAG_04380"/>
<dbReference type="VEuPathDB" id="FungiDB:UMAG_04380"/>
<dbReference type="eggNOG" id="KOG2173">
    <property type="taxonomic scope" value="Eukaryota"/>
</dbReference>
<dbReference type="HOGENOM" id="CLU_006200_3_0_1"/>
<dbReference type="InParanoid" id="Q4P683"/>
<dbReference type="OMA" id="IPTGECV"/>
<dbReference type="OrthoDB" id="2020634at2759"/>
<dbReference type="Proteomes" id="UP000000561">
    <property type="component" value="Chromosome 14"/>
</dbReference>
<dbReference type="GO" id="GO:0005776">
    <property type="term" value="C:autophagosome"/>
    <property type="evidence" value="ECO:0000318"/>
    <property type="project" value="GO_Central"/>
</dbReference>
<dbReference type="GO" id="GO:0030659">
    <property type="term" value="C:cytoplasmic vesicle membrane"/>
    <property type="evidence" value="ECO:0007669"/>
    <property type="project" value="UniProtKB-SubCell"/>
</dbReference>
<dbReference type="GO" id="GO:0005789">
    <property type="term" value="C:endoplasmic reticulum membrane"/>
    <property type="evidence" value="ECO:0007669"/>
    <property type="project" value="UniProtKB-SubCell"/>
</dbReference>
<dbReference type="GO" id="GO:0000139">
    <property type="term" value="C:Golgi membrane"/>
    <property type="evidence" value="ECO:0007669"/>
    <property type="project" value="UniProtKB-SubCell"/>
</dbReference>
<dbReference type="GO" id="GO:0000407">
    <property type="term" value="C:phagophore assembly site"/>
    <property type="evidence" value="ECO:0000318"/>
    <property type="project" value="GO_Central"/>
</dbReference>
<dbReference type="GO" id="GO:0034045">
    <property type="term" value="C:phagophore assembly site membrane"/>
    <property type="evidence" value="ECO:0007669"/>
    <property type="project" value="UniProtKB-SubCell"/>
</dbReference>
<dbReference type="GO" id="GO:0006869">
    <property type="term" value="P:lipid transport"/>
    <property type="evidence" value="ECO:0007669"/>
    <property type="project" value="UniProtKB-KW"/>
</dbReference>
<dbReference type="GO" id="GO:0000423">
    <property type="term" value="P:mitophagy"/>
    <property type="evidence" value="ECO:0000318"/>
    <property type="project" value="GO_Central"/>
</dbReference>
<dbReference type="GO" id="GO:0034727">
    <property type="term" value="P:piecemeal microautophagy of the nucleus"/>
    <property type="evidence" value="ECO:0000318"/>
    <property type="project" value="GO_Central"/>
</dbReference>
<dbReference type="GO" id="GO:0034497">
    <property type="term" value="P:protein localization to phagophore assembly site"/>
    <property type="evidence" value="ECO:0000318"/>
    <property type="project" value="GO_Central"/>
</dbReference>
<dbReference type="GO" id="GO:0061709">
    <property type="term" value="P:reticulophagy"/>
    <property type="evidence" value="ECO:0000318"/>
    <property type="project" value="GO_Central"/>
</dbReference>
<dbReference type="InterPro" id="IPR007241">
    <property type="entry name" value="Autophagy-rel_prot_9"/>
</dbReference>
<dbReference type="PANTHER" id="PTHR13038">
    <property type="entry name" value="APG9 AUTOPHAGY 9"/>
    <property type="match status" value="1"/>
</dbReference>
<dbReference type="PANTHER" id="PTHR13038:SF10">
    <property type="entry name" value="AUTOPHAGY-RELATED PROTEIN 9"/>
    <property type="match status" value="1"/>
</dbReference>
<dbReference type="Pfam" id="PF04109">
    <property type="entry name" value="ATG9"/>
    <property type="match status" value="1"/>
</dbReference>
<evidence type="ECO:0000250" key="1">
    <source>
        <dbReference type="UniProtKB" id="O74312"/>
    </source>
</evidence>
<evidence type="ECO:0000250" key="2">
    <source>
        <dbReference type="UniProtKB" id="Q12142"/>
    </source>
</evidence>
<evidence type="ECO:0000255" key="3"/>
<evidence type="ECO:0000256" key="4">
    <source>
        <dbReference type="SAM" id="MobiDB-lite"/>
    </source>
</evidence>
<evidence type="ECO:0000305" key="5"/>
<organism>
    <name type="scientific">Mycosarcoma maydis</name>
    <name type="common">Corn smut fungus</name>
    <name type="synonym">Ustilago maydis</name>
    <dbReference type="NCBI Taxonomy" id="5270"/>
    <lineage>
        <taxon>Eukaryota</taxon>
        <taxon>Fungi</taxon>
        <taxon>Dikarya</taxon>
        <taxon>Basidiomycota</taxon>
        <taxon>Ustilaginomycotina</taxon>
        <taxon>Ustilaginomycetes</taxon>
        <taxon>Ustilaginales</taxon>
        <taxon>Ustilaginaceae</taxon>
        <taxon>Mycosarcoma</taxon>
    </lineage>
</organism>
<proteinExistence type="inferred from homology"/>
<reference key="1">
    <citation type="journal article" date="2006" name="Nature">
        <title>Insights from the genome of the biotrophic fungal plant pathogen Ustilago maydis.</title>
        <authorList>
            <person name="Kaemper J."/>
            <person name="Kahmann R."/>
            <person name="Boelker M."/>
            <person name="Ma L.-J."/>
            <person name="Brefort T."/>
            <person name="Saville B.J."/>
            <person name="Banuett F."/>
            <person name="Kronstad J.W."/>
            <person name="Gold S.E."/>
            <person name="Mueller O."/>
            <person name="Perlin M.H."/>
            <person name="Woesten H.A.B."/>
            <person name="de Vries R."/>
            <person name="Ruiz-Herrera J."/>
            <person name="Reynaga-Pena C.G."/>
            <person name="Snetselaar K."/>
            <person name="McCann M."/>
            <person name="Perez-Martin J."/>
            <person name="Feldbruegge M."/>
            <person name="Basse C.W."/>
            <person name="Steinberg G."/>
            <person name="Ibeas J.I."/>
            <person name="Holloman W."/>
            <person name="Guzman P."/>
            <person name="Farman M.L."/>
            <person name="Stajich J.E."/>
            <person name="Sentandreu R."/>
            <person name="Gonzalez-Prieto J.M."/>
            <person name="Kennell J.C."/>
            <person name="Molina L."/>
            <person name="Schirawski J."/>
            <person name="Mendoza-Mendoza A."/>
            <person name="Greilinger D."/>
            <person name="Muench K."/>
            <person name="Roessel N."/>
            <person name="Scherer M."/>
            <person name="Vranes M."/>
            <person name="Ladendorf O."/>
            <person name="Vincon V."/>
            <person name="Fuchs U."/>
            <person name="Sandrock B."/>
            <person name="Meng S."/>
            <person name="Ho E.C.H."/>
            <person name="Cahill M.J."/>
            <person name="Boyce K.J."/>
            <person name="Klose J."/>
            <person name="Klosterman S.J."/>
            <person name="Deelstra H.J."/>
            <person name="Ortiz-Castellanos L."/>
            <person name="Li W."/>
            <person name="Sanchez-Alonso P."/>
            <person name="Schreier P.H."/>
            <person name="Haeuser-Hahn I."/>
            <person name="Vaupel M."/>
            <person name="Koopmann E."/>
            <person name="Friedrich G."/>
            <person name="Voss H."/>
            <person name="Schlueter T."/>
            <person name="Margolis J."/>
            <person name="Platt D."/>
            <person name="Swimmer C."/>
            <person name="Gnirke A."/>
            <person name="Chen F."/>
            <person name="Vysotskaia V."/>
            <person name="Mannhaupt G."/>
            <person name="Gueldener U."/>
            <person name="Muensterkoetter M."/>
            <person name="Haase D."/>
            <person name="Oesterheld M."/>
            <person name="Mewes H.-W."/>
            <person name="Mauceli E.W."/>
            <person name="DeCaprio D."/>
            <person name="Wade C.M."/>
            <person name="Butler J."/>
            <person name="Young S.K."/>
            <person name="Jaffe D.B."/>
            <person name="Calvo S.E."/>
            <person name="Nusbaum C."/>
            <person name="Galagan J.E."/>
            <person name="Birren B.W."/>
        </authorList>
    </citation>
    <scope>NUCLEOTIDE SEQUENCE [LARGE SCALE GENOMIC DNA]</scope>
    <source>
        <strain>DSM 14603 / FGSC 9021 / UM521</strain>
    </source>
</reference>
<reference key="2">
    <citation type="submission" date="2014-09" db="EMBL/GenBank/DDBJ databases">
        <authorList>
            <person name="Gueldener U."/>
            <person name="Muensterkoetter M."/>
            <person name="Walter M.C."/>
            <person name="Mannhaupt G."/>
            <person name="Kahmann R."/>
        </authorList>
    </citation>
    <scope>GENOME REANNOTATION</scope>
    <source>
        <strain>DSM 14603 / FGSC 9021 / UM521</strain>
    </source>
</reference>
<accession>Q4P683</accession>
<accession>A0A0D1CKB0</accession>
<feature type="chain" id="PRO_0000317917" description="Autophagy-related protein 9">
    <location>
        <begin position="1"/>
        <end position="788"/>
    </location>
</feature>
<feature type="topological domain" description="Cytoplasmic" evidence="5">
    <location>
        <begin position="1"/>
        <end position="195"/>
    </location>
</feature>
<feature type="transmembrane region" description="Helical" evidence="3">
    <location>
        <begin position="196"/>
        <end position="216"/>
    </location>
</feature>
<feature type="topological domain" description="Lumenal" evidence="5">
    <location>
        <begin position="217"/>
        <end position="235"/>
    </location>
</feature>
<feature type="transmembrane region" description="Helical" evidence="3">
    <location>
        <begin position="236"/>
        <end position="256"/>
    </location>
</feature>
<feature type="topological domain" description="Cytoplasmic" evidence="5">
    <location>
        <begin position="257"/>
        <end position="416"/>
    </location>
</feature>
<feature type="intramembrane region" evidence="1">
    <location>
        <begin position="417"/>
        <end position="437"/>
    </location>
</feature>
<feature type="topological domain" description="Cytoplasmic" evidence="5">
    <location>
        <begin position="438"/>
        <end position="500"/>
    </location>
</feature>
<feature type="transmembrane region" description="Helical" evidence="3">
    <location>
        <begin position="501"/>
        <end position="521"/>
    </location>
</feature>
<feature type="topological domain" description="Lumenal" evidence="5">
    <location>
        <begin position="522"/>
        <end position="538"/>
    </location>
</feature>
<feature type="transmembrane region" description="Helical" evidence="3">
    <location>
        <begin position="539"/>
        <end position="559"/>
    </location>
</feature>
<feature type="topological domain" description="Cytoplasmic" evidence="5">
    <location>
        <begin position="560"/>
        <end position="605"/>
    </location>
</feature>
<feature type="intramembrane region" evidence="1">
    <location>
        <begin position="606"/>
        <end position="626"/>
    </location>
</feature>
<feature type="topological domain" description="Cytoplasmic" evidence="5">
    <location>
        <begin position="627"/>
        <end position="788"/>
    </location>
</feature>
<feature type="region of interest" description="Disordered" evidence="4">
    <location>
        <begin position="1"/>
        <end position="22"/>
    </location>
</feature>
<feature type="region of interest" description="Disordered" evidence="4">
    <location>
        <begin position="87"/>
        <end position="108"/>
    </location>
</feature>
<feature type="region of interest" description="Disordered" evidence="4">
    <location>
        <begin position="124"/>
        <end position="153"/>
    </location>
</feature>
<feature type="region of interest" description="Disordered" evidence="4">
    <location>
        <begin position="307"/>
        <end position="332"/>
    </location>
</feature>
<feature type="region of interest" description="Disordered" evidence="4">
    <location>
        <begin position="668"/>
        <end position="706"/>
    </location>
</feature>
<feature type="region of interest" description="Disordered" evidence="4">
    <location>
        <begin position="742"/>
        <end position="762"/>
    </location>
</feature>
<feature type="compositionally biased region" description="Basic and acidic residues" evidence="4">
    <location>
        <begin position="1"/>
        <end position="14"/>
    </location>
</feature>
<feature type="compositionally biased region" description="Acidic residues" evidence="4">
    <location>
        <begin position="97"/>
        <end position="108"/>
    </location>
</feature>
<feature type="compositionally biased region" description="Polar residues" evidence="4">
    <location>
        <begin position="125"/>
        <end position="134"/>
    </location>
</feature>
<feature type="compositionally biased region" description="Low complexity" evidence="4">
    <location>
        <begin position="679"/>
        <end position="689"/>
    </location>
</feature>
<gene>
    <name type="primary">ATG9</name>
    <name type="ORF">UMAG_04380</name>
</gene>